<keyword id="KW-0028">Amino-acid biosynthesis</keyword>
<keyword id="KW-0963">Cytoplasm</keyword>
<keyword id="KW-0315">Glutamine amidotransferase</keyword>
<keyword id="KW-0368">Histidine biosynthesis</keyword>
<keyword id="KW-0378">Hydrolase</keyword>
<keyword id="KW-0456">Lyase</keyword>
<organism>
    <name type="scientific">Xanthomonas euvesicatoria pv. vesicatoria (strain 85-10)</name>
    <name type="common">Xanthomonas campestris pv. vesicatoria</name>
    <dbReference type="NCBI Taxonomy" id="316273"/>
    <lineage>
        <taxon>Bacteria</taxon>
        <taxon>Pseudomonadati</taxon>
        <taxon>Pseudomonadota</taxon>
        <taxon>Gammaproteobacteria</taxon>
        <taxon>Lysobacterales</taxon>
        <taxon>Lysobacteraceae</taxon>
        <taxon>Xanthomonas</taxon>
    </lineage>
</organism>
<gene>
    <name evidence="1" type="primary">hisH</name>
    <name type="ordered locus">XCV1878</name>
</gene>
<dbReference type="EC" id="4.3.2.10" evidence="1"/>
<dbReference type="EC" id="3.5.1.2" evidence="1"/>
<dbReference type="EMBL" id="AM039952">
    <property type="protein sequence ID" value="CAJ23555.1"/>
    <property type="molecule type" value="Genomic_DNA"/>
</dbReference>
<dbReference type="RefSeq" id="WP_011347188.1">
    <property type="nucleotide sequence ID" value="NZ_CP017190.1"/>
</dbReference>
<dbReference type="SMR" id="Q3BUF4"/>
<dbReference type="STRING" id="456327.BJD11_13035"/>
<dbReference type="KEGG" id="xcv:XCV1878"/>
<dbReference type="eggNOG" id="COG0118">
    <property type="taxonomic scope" value="Bacteria"/>
</dbReference>
<dbReference type="HOGENOM" id="CLU_071837_0_0_6"/>
<dbReference type="UniPathway" id="UPA00031">
    <property type="reaction ID" value="UER00010"/>
</dbReference>
<dbReference type="Proteomes" id="UP000007069">
    <property type="component" value="Chromosome"/>
</dbReference>
<dbReference type="GO" id="GO:0005737">
    <property type="term" value="C:cytoplasm"/>
    <property type="evidence" value="ECO:0007669"/>
    <property type="project" value="UniProtKB-SubCell"/>
</dbReference>
<dbReference type="GO" id="GO:0004359">
    <property type="term" value="F:glutaminase activity"/>
    <property type="evidence" value="ECO:0007669"/>
    <property type="project" value="UniProtKB-EC"/>
</dbReference>
<dbReference type="GO" id="GO:0000107">
    <property type="term" value="F:imidazoleglycerol-phosphate synthase activity"/>
    <property type="evidence" value="ECO:0007669"/>
    <property type="project" value="UniProtKB-UniRule"/>
</dbReference>
<dbReference type="GO" id="GO:0016829">
    <property type="term" value="F:lyase activity"/>
    <property type="evidence" value="ECO:0007669"/>
    <property type="project" value="UniProtKB-KW"/>
</dbReference>
<dbReference type="GO" id="GO:0000105">
    <property type="term" value="P:L-histidine biosynthetic process"/>
    <property type="evidence" value="ECO:0007669"/>
    <property type="project" value="UniProtKB-UniRule"/>
</dbReference>
<dbReference type="CDD" id="cd01748">
    <property type="entry name" value="GATase1_IGP_Synthase"/>
    <property type="match status" value="1"/>
</dbReference>
<dbReference type="FunFam" id="3.40.50.880:FF:000009">
    <property type="entry name" value="Imidazole glycerol phosphate synthase subunit HisH"/>
    <property type="match status" value="1"/>
</dbReference>
<dbReference type="Gene3D" id="3.40.50.880">
    <property type="match status" value="1"/>
</dbReference>
<dbReference type="HAMAP" id="MF_00278">
    <property type="entry name" value="HisH"/>
    <property type="match status" value="1"/>
</dbReference>
<dbReference type="InterPro" id="IPR029062">
    <property type="entry name" value="Class_I_gatase-like"/>
</dbReference>
<dbReference type="InterPro" id="IPR017926">
    <property type="entry name" value="GATASE"/>
</dbReference>
<dbReference type="InterPro" id="IPR010139">
    <property type="entry name" value="Imidazole-glycPsynth_HisH"/>
</dbReference>
<dbReference type="NCBIfam" id="TIGR01855">
    <property type="entry name" value="IMP_synth_hisH"/>
    <property type="match status" value="1"/>
</dbReference>
<dbReference type="PANTHER" id="PTHR42701">
    <property type="entry name" value="IMIDAZOLE GLYCEROL PHOSPHATE SYNTHASE SUBUNIT HISH"/>
    <property type="match status" value="1"/>
</dbReference>
<dbReference type="PANTHER" id="PTHR42701:SF1">
    <property type="entry name" value="IMIDAZOLE GLYCEROL PHOSPHATE SYNTHASE SUBUNIT HISH"/>
    <property type="match status" value="1"/>
</dbReference>
<dbReference type="Pfam" id="PF00117">
    <property type="entry name" value="GATase"/>
    <property type="match status" value="1"/>
</dbReference>
<dbReference type="PIRSF" id="PIRSF000495">
    <property type="entry name" value="Amidotransf_hisH"/>
    <property type="match status" value="1"/>
</dbReference>
<dbReference type="SUPFAM" id="SSF52317">
    <property type="entry name" value="Class I glutamine amidotransferase-like"/>
    <property type="match status" value="1"/>
</dbReference>
<dbReference type="PROSITE" id="PS51273">
    <property type="entry name" value="GATASE_TYPE_1"/>
    <property type="match status" value="1"/>
</dbReference>
<name>HIS5_XANE5</name>
<evidence type="ECO:0000255" key="1">
    <source>
        <dbReference type="HAMAP-Rule" id="MF_00278"/>
    </source>
</evidence>
<proteinExistence type="inferred from homology"/>
<protein>
    <recommendedName>
        <fullName evidence="1">Imidazole glycerol phosphate synthase subunit HisH</fullName>
        <ecNumber evidence="1">4.3.2.10</ecNumber>
    </recommendedName>
    <alternativeName>
        <fullName evidence="1">IGP synthase glutaminase subunit</fullName>
        <ecNumber evidence="1">3.5.1.2</ecNumber>
    </alternativeName>
    <alternativeName>
        <fullName evidence="1">IGP synthase subunit HisH</fullName>
    </alternativeName>
    <alternativeName>
        <fullName evidence="1">ImGP synthase subunit HisH</fullName>
        <shortName evidence="1">IGPS subunit HisH</shortName>
    </alternativeName>
</protein>
<reference key="1">
    <citation type="journal article" date="2005" name="J. Bacteriol.">
        <title>Insights into genome plasticity and pathogenicity of the plant pathogenic Bacterium Xanthomonas campestris pv. vesicatoria revealed by the complete genome sequence.</title>
        <authorList>
            <person name="Thieme F."/>
            <person name="Koebnik R."/>
            <person name="Bekel T."/>
            <person name="Berger C."/>
            <person name="Boch J."/>
            <person name="Buettner D."/>
            <person name="Caldana C."/>
            <person name="Gaigalat L."/>
            <person name="Goesmann A."/>
            <person name="Kay S."/>
            <person name="Kirchner O."/>
            <person name="Lanz C."/>
            <person name="Linke B."/>
            <person name="McHardy A.C."/>
            <person name="Meyer F."/>
            <person name="Mittenhuber G."/>
            <person name="Nies D.H."/>
            <person name="Niesbach-Kloesgen U."/>
            <person name="Patschkowski T."/>
            <person name="Rueckert C."/>
            <person name="Rupp O."/>
            <person name="Schneiker S."/>
            <person name="Schuster S.C."/>
            <person name="Vorhoelter F.J."/>
            <person name="Weber E."/>
            <person name="Puehler A."/>
            <person name="Bonas U."/>
            <person name="Bartels D."/>
            <person name="Kaiser O."/>
        </authorList>
    </citation>
    <scope>NUCLEOTIDE SEQUENCE [LARGE SCALE GENOMIC DNA]</scope>
    <source>
        <strain>85-10</strain>
    </source>
</reference>
<accession>Q3BUF4</accession>
<sequence length="200" mass="21223">MTDVALIDAGGANLGSVRYALERLGVDARVVRDAAGLHGAQRVILPGVGAAPEAMSRLRTQGLVEPLRALQVPLIGICLGMQLLFEHSEEGDVECLGLLPGIVRHMTPALGIRVPHMGWNQLVPMRESALLAGLPERASAYFVHGYAAPVTADTVAACDHGGLFTAVVQNGLRCGAQFHPERSADTGARILRNFLEMSFP</sequence>
<comment type="function">
    <text evidence="1">IGPS catalyzes the conversion of PRFAR and glutamine to IGP, AICAR and glutamate. The HisH subunit catalyzes the hydrolysis of glutamine to glutamate and ammonia as part of the synthesis of IGP and AICAR. The resulting ammonia molecule is channeled to the active site of HisF.</text>
</comment>
<comment type="catalytic activity">
    <reaction evidence="1">
        <text>5-[(5-phospho-1-deoxy-D-ribulos-1-ylimino)methylamino]-1-(5-phospho-beta-D-ribosyl)imidazole-4-carboxamide + L-glutamine = D-erythro-1-(imidazol-4-yl)glycerol 3-phosphate + 5-amino-1-(5-phospho-beta-D-ribosyl)imidazole-4-carboxamide + L-glutamate + H(+)</text>
        <dbReference type="Rhea" id="RHEA:24793"/>
        <dbReference type="ChEBI" id="CHEBI:15378"/>
        <dbReference type="ChEBI" id="CHEBI:29985"/>
        <dbReference type="ChEBI" id="CHEBI:58278"/>
        <dbReference type="ChEBI" id="CHEBI:58359"/>
        <dbReference type="ChEBI" id="CHEBI:58475"/>
        <dbReference type="ChEBI" id="CHEBI:58525"/>
        <dbReference type="EC" id="4.3.2.10"/>
    </reaction>
</comment>
<comment type="catalytic activity">
    <reaction evidence="1">
        <text>L-glutamine + H2O = L-glutamate + NH4(+)</text>
        <dbReference type="Rhea" id="RHEA:15889"/>
        <dbReference type="ChEBI" id="CHEBI:15377"/>
        <dbReference type="ChEBI" id="CHEBI:28938"/>
        <dbReference type="ChEBI" id="CHEBI:29985"/>
        <dbReference type="ChEBI" id="CHEBI:58359"/>
        <dbReference type="EC" id="3.5.1.2"/>
    </reaction>
</comment>
<comment type="pathway">
    <text evidence="1">Amino-acid biosynthesis; L-histidine biosynthesis; L-histidine from 5-phospho-alpha-D-ribose 1-diphosphate: step 5/9.</text>
</comment>
<comment type="subunit">
    <text evidence="1">Heterodimer of HisH and HisF.</text>
</comment>
<comment type="subcellular location">
    <subcellularLocation>
        <location evidence="1">Cytoplasm</location>
    </subcellularLocation>
</comment>
<feature type="chain" id="PRO_0000231771" description="Imidazole glycerol phosphate synthase subunit HisH">
    <location>
        <begin position="1"/>
        <end position="200"/>
    </location>
</feature>
<feature type="domain" description="Glutamine amidotransferase type-1" evidence="1">
    <location>
        <begin position="3"/>
        <end position="200"/>
    </location>
</feature>
<feature type="active site" description="Nucleophile" evidence="1">
    <location>
        <position position="78"/>
    </location>
</feature>
<feature type="active site" evidence="1">
    <location>
        <position position="179"/>
    </location>
</feature>
<feature type="active site" evidence="1">
    <location>
        <position position="181"/>
    </location>
</feature>